<organism>
    <name type="scientific">Sulfurihydrogenibium sp. (strain YO3AOP1)</name>
    <dbReference type="NCBI Taxonomy" id="436114"/>
    <lineage>
        <taxon>Bacteria</taxon>
        <taxon>Pseudomonadati</taxon>
        <taxon>Aquificota</taxon>
        <taxon>Aquificia</taxon>
        <taxon>Aquificales</taxon>
        <taxon>Hydrogenothermaceae</taxon>
        <taxon>Sulfurihydrogenibium</taxon>
    </lineage>
</organism>
<comment type="catalytic activity">
    <reaction evidence="1">
        <text>2-(N(omega)-L-arginino)succinate = fumarate + L-arginine</text>
        <dbReference type="Rhea" id="RHEA:24020"/>
        <dbReference type="ChEBI" id="CHEBI:29806"/>
        <dbReference type="ChEBI" id="CHEBI:32682"/>
        <dbReference type="ChEBI" id="CHEBI:57472"/>
        <dbReference type="EC" id="4.3.2.1"/>
    </reaction>
</comment>
<comment type="pathway">
    <text evidence="1">Amino-acid biosynthesis; L-arginine biosynthesis; L-arginine from L-ornithine and carbamoyl phosphate: step 3/3.</text>
</comment>
<comment type="subcellular location">
    <subcellularLocation>
        <location evidence="1">Cytoplasm</location>
    </subcellularLocation>
</comment>
<comment type="similarity">
    <text evidence="1">Belongs to the lyase 1 family. Argininosuccinate lyase subfamily.</text>
</comment>
<name>ARLY_SULSY</name>
<keyword id="KW-0028">Amino-acid biosynthesis</keyword>
<keyword id="KW-0055">Arginine biosynthesis</keyword>
<keyword id="KW-0963">Cytoplasm</keyword>
<keyword id="KW-0456">Lyase</keyword>
<gene>
    <name evidence="1" type="primary">argH</name>
    <name type="ordered locus">SYO3AOP1_0123</name>
</gene>
<proteinExistence type="inferred from homology"/>
<protein>
    <recommendedName>
        <fullName evidence="1">Argininosuccinate lyase</fullName>
        <shortName evidence="1">ASAL</shortName>
        <ecNumber evidence="1">4.3.2.1</ecNumber>
    </recommendedName>
    <alternativeName>
        <fullName evidence="1">Arginosuccinase</fullName>
    </alternativeName>
</protein>
<evidence type="ECO:0000255" key="1">
    <source>
        <dbReference type="HAMAP-Rule" id="MF_00006"/>
    </source>
</evidence>
<reference key="1">
    <citation type="journal article" date="2009" name="J. Bacteriol.">
        <title>Complete and draft genome sequences of six members of the Aquificales.</title>
        <authorList>
            <person name="Reysenbach A.-L."/>
            <person name="Hamamura N."/>
            <person name="Podar M."/>
            <person name="Griffiths E."/>
            <person name="Ferreira S."/>
            <person name="Hochstein R."/>
            <person name="Heidelberg J."/>
            <person name="Johnson J."/>
            <person name="Mead D."/>
            <person name="Pohorille A."/>
            <person name="Sarmiento M."/>
            <person name="Schweighofer K."/>
            <person name="Seshadri R."/>
            <person name="Voytek M.A."/>
        </authorList>
    </citation>
    <scope>NUCLEOTIDE SEQUENCE [LARGE SCALE GENOMIC DNA]</scope>
    <source>
        <strain>YO3AOP1</strain>
    </source>
</reference>
<feature type="chain" id="PRO_1000089123" description="Argininosuccinate lyase">
    <location>
        <begin position="1"/>
        <end position="459"/>
    </location>
</feature>
<dbReference type="EC" id="4.3.2.1" evidence="1"/>
<dbReference type="EMBL" id="CP001080">
    <property type="protein sequence ID" value="ACD65769.1"/>
    <property type="molecule type" value="Genomic_DNA"/>
</dbReference>
<dbReference type="RefSeq" id="WP_012458860.1">
    <property type="nucleotide sequence ID" value="NC_010730.1"/>
</dbReference>
<dbReference type="SMR" id="B2V6Y7"/>
<dbReference type="STRING" id="436114.SYO3AOP1_0123"/>
<dbReference type="KEGG" id="sul:SYO3AOP1_0123"/>
<dbReference type="eggNOG" id="COG0165">
    <property type="taxonomic scope" value="Bacteria"/>
</dbReference>
<dbReference type="HOGENOM" id="CLU_027272_2_3_0"/>
<dbReference type="UniPathway" id="UPA00068">
    <property type="reaction ID" value="UER00114"/>
</dbReference>
<dbReference type="GO" id="GO:0005829">
    <property type="term" value="C:cytosol"/>
    <property type="evidence" value="ECO:0007669"/>
    <property type="project" value="TreeGrafter"/>
</dbReference>
<dbReference type="GO" id="GO:0004056">
    <property type="term" value="F:argininosuccinate lyase activity"/>
    <property type="evidence" value="ECO:0007669"/>
    <property type="project" value="UniProtKB-UniRule"/>
</dbReference>
<dbReference type="GO" id="GO:0042450">
    <property type="term" value="P:arginine biosynthetic process via ornithine"/>
    <property type="evidence" value="ECO:0007669"/>
    <property type="project" value="InterPro"/>
</dbReference>
<dbReference type="GO" id="GO:0006526">
    <property type="term" value="P:L-arginine biosynthetic process"/>
    <property type="evidence" value="ECO:0007669"/>
    <property type="project" value="UniProtKB-UniRule"/>
</dbReference>
<dbReference type="CDD" id="cd01359">
    <property type="entry name" value="Argininosuccinate_lyase"/>
    <property type="match status" value="1"/>
</dbReference>
<dbReference type="FunFam" id="1.10.275.10:FF:000002">
    <property type="entry name" value="Argininosuccinate lyase"/>
    <property type="match status" value="1"/>
</dbReference>
<dbReference type="FunFam" id="1.10.40.30:FF:000001">
    <property type="entry name" value="Argininosuccinate lyase"/>
    <property type="match status" value="1"/>
</dbReference>
<dbReference type="FunFam" id="1.20.200.10:FF:000015">
    <property type="entry name" value="argininosuccinate lyase isoform X2"/>
    <property type="match status" value="1"/>
</dbReference>
<dbReference type="Gene3D" id="1.10.40.30">
    <property type="entry name" value="Fumarase/aspartase (C-terminal domain)"/>
    <property type="match status" value="1"/>
</dbReference>
<dbReference type="Gene3D" id="1.20.200.10">
    <property type="entry name" value="Fumarase/aspartase (Central domain)"/>
    <property type="match status" value="1"/>
</dbReference>
<dbReference type="Gene3D" id="1.10.275.10">
    <property type="entry name" value="Fumarase/aspartase (N-terminal domain)"/>
    <property type="match status" value="1"/>
</dbReference>
<dbReference type="HAMAP" id="MF_00006">
    <property type="entry name" value="Arg_succ_lyase"/>
    <property type="match status" value="1"/>
</dbReference>
<dbReference type="InterPro" id="IPR029419">
    <property type="entry name" value="Arg_succ_lyase_C"/>
</dbReference>
<dbReference type="InterPro" id="IPR009049">
    <property type="entry name" value="Argininosuccinate_lyase"/>
</dbReference>
<dbReference type="InterPro" id="IPR024083">
    <property type="entry name" value="Fumarase/histidase_N"/>
</dbReference>
<dbReference type="InterPro" id="IPR020557">
    <property type="entry name" value="Fumarate_lyase_CS"/>
</dbReference>
<dbReference type="InterPro" id="IPR000362">
    <property type="entry name" value="Fumarate_lyase_fam"/>
</dbReference>
<dbReference type="InterPro" id="IPR022761">
    <property type="entry name" value="Fumarate_lyase_N"/>
</dbReference>
<dbReference type="InterPro" id="IPR008948">
    <property type="entry name" value="L-Aspartase-like"/>
</dbReference>
<dbReference type="NCBIfam" id="TIGR00838">
    <property type="entry name" value="argH"/>
    <property type="match status" value="1"/>
</dbReference>
<dbReference type="PANTHER" id="PTHR43814">
    <property type="entry name" value="ARGININOSUCCINATE LYASE"/>
    <property type="match status" value="1"/>
</dbReference>
<dbReference type="PANTHER" id="PTHR43814:SF1">
    <property type="entry name" value="ARGININOSUCCINATE LYASE"/>
    <property type="match status" value="1"/>
</dbReference>
<dbReference type="Pfam" id="PF14698">
    <property type="entry name" value="ASL_C2"/>
    <property type="match status" value="1"/>
</dbReference>
<dbReference type="Pfam" id="PF00206">
    <property type="entry name" value="Lyase_1"/>
    <property type="match status" value="1"/>
</dbReference>
<dbReference type="PRINTS" id="PR00145">
    <property type="entry name" value="ARGSUCLYASE"/>
</dbReference>
<dbReference type="PRINTS" id="PR00149">
    <property type="entry name" value="FUMRATELYASE"/>
</dbReference>
<dbReference type="SUPFAM" id="SSF48557">
    <property type="entry name" value="L-aspartase-like"/>
    <property type="match status" value="1"/>
</dbReference>
<dbReference type="PROSITE" id="PS00163">
    <property type="entry name" value="FUMARATE_LYASES"/>
    <property type="match status" value="1"/>
</dbReference>
<accession>B2V6Y7</accession>
<sequence>MQEKKLWGGRFSESTDAFVEEFTESISFDKELALYDIKGSMAHAKMLGKQGIIPQEDAEKIVKGLQDIEQEIKENKFVWKKELEDVHMNIEKALTDKIGKAGGKLHTGRSRNDQVITAFRLYLKENTQDIINLLEDLQRKLLEKAKEYIDVVMPAYTHLQRAQPIRAAHYFLAYLEMFQRDKERFIDNLKRIDMLPLGSGAVAGVDFPIDREYVAKELGFSQIMRNSIDATSSRDFALEFLSNCAICMANMSRFSEDMIIYSSSEFSFVELPDKLTTGSSIMPQKKNPDVLELIRGKTGRVYGNLISLLTVVKGLPLAYNRDLQEDKGPVFDSVKTIKGSIIGITKIVEGLKLNREKTQLAAGGFALATDLANYLAEKGVPFRQAHHIVGSIVGYLVNQGRELESITLEELKQFSHLFEEDALKLLSPFVVADRRKSFGGTAKEQILSQIEYWDKILNK</sequence>